<dbReference type="EMBL" id="AF186752">
    <property type="protein sequence ID" value="AAF04829.1"/>
    <property type="molecule type" value="Genomic_DNA"/>
</dbReference>
<dbReference type="EMBL" id="AF311734">
    <property type="protein sequence ID" value="AAG27476.1"/>
    <property type="molecule type" value="Genomic_DNA"/>
</dbReference>
<dbReference type="KEGG" id="vg:949229"/>
<dbReference type="OrthoDB" id="24090at10239"/>
<dbReference type="Proteomes" id="UP000008267">
    <property type="component" value="Genome"/>
</dbReference>
<dbReference type="GO" id="GO:0020002">
    <property type="term" value="C:host cell plasma membrane"/>
    <property type="evidence" value="ECO:0007669"/>
    <property type="project" value="UniProtKB-SubCell"/>
</dbReference>
<dbReference type="GO" id="GO:0016020">
    <property type="term" value="C:membrane"/>
    <property type="evidence" value="ECO:0007669"/>
    <property type="project" value="UniProtKB-KW"/>
</dbReference>
<dbReference type="GO" id="GO:0052170">
    <property type="term" value="P:symbiont-mediated suppression of host innate immune response"/>
    <property type="evidence" value="ECO:0007669"/>
    <property type="project" value="UniProtKB-KW"/>
</dbReference>
<dbReference type="InterPro" id="IPR002488">
    <property type="entry name" value="Gemini_C4"/>
</dbReference>
<dbReference type="Pfam" id="PF01492">
    <property type="entry name" value="Gemini_C4"/>
    <property type="match status" value="1"/>
</dbReference>
<organism>
    <name type="scientific">Tomato yellow leaf curl China virus</name>
    <name type="common">TYLCCNV</name>
    <dbReference type="NCBI Taxonomy" id="185793"/>
    <lineage>
        <taxon>Viruses</taxon>
        <taxon>Monodnaviria</taxon>
        <taxon>Shotokuvirae</taxon>
        <taxon>Cressdnaviricota</taxon>
        <taxon>Repensiviricetes</taxon>
        <taxon>Geplafuvirales</taxon>
        <taxon>Geminiviridae</taxon>
        <taxon>Begomovirus</taxon>
    </lineage>
</organism>
<evidence type="ECO:0000250" key="1"/>
<evidence type="ECO:0000256" key="2">
    <source>
        <dbReference type="SAM" id="MobiDB-lite"/>
    </source>
</evidence>
<evidence type="ECO:0000305" key="3"/>
<reference key="1">
    <citation type="journal article" date="2001" name="Virus Res.">
        <title>Tomato yellow leaf curl China virus: monopartite genome organization and agroinfection of plants.</title>
        <authorList>
            <person name="Yin Q."/>
            <person name="Yang H."/>
            <person name="Gong Q."/>
            <person name="Wang H."/>
            <person name="Liu Y."/>
            <person name="Hong Y."/>
            <person name="Tien P."/>
        </authorList>
    </citation>
    <scope>NUCLEOTIDE SEQUENCE [GENOMIC DNA]</scope>
    <source>
        <strain>Isolate CHI</strain>
    </source>
</reference>
<organismHost>
    <name type="scientific">Nicotiana tabacum</name>
    <name type="common">Common tobacco</name>
    <dbReference type="NCBI Taxonomy" id="4097"/>
</organismHost>
<organismHost>
    <name type="scientific">Sigesbeckia orientalis</name>
    <dbReference type="NCBI Taxonomy" id="185191"/>
</organismHost>
<organismHost>
    <name type="scientific">Solanum lycopersicum</name>
    <name type="common">Tomato</name>
    <name type="synonym">Lycopersicon esculentum</name>
    <dbReference type="NCBI Taxonomy" id="4081"/>
</organismHost>
<gene>
    <name type="ORF">C4</name>
    <name type="ORF">L4</name>
</gene>
<proteinExistence type="inferred from homology"/>
<keyword id="KW-1032">Host cell membrane</keyword>
<keyword id="KW-1043">Host membrane</keyword>
<keyword id="KW-0945">Host-virus interaction</keyword>
<keyword id="KW-1090">Inhibition of host innate immune response by virus</keyword>
<keyword id="KW-0449">Lipoprotein</keyword>
<keyword id="KW-0472">Membrane</keyword>
<keyword id="KW-0519">Myristate</keyword>
<keyword id="KW-1185">Reference proteome</keyword>
<keyword id="KW-0941">Suppressor of RNA silencing</keyword>
<keyword id="KW-0899">Viral immunoevasion</keyword>
<name>AC4_TYLCC</name>
<accession>Q9QDJ8</accession>
<protein>
    <recommendedName>
        <fullName>Protein C4</fullName>
    </recommendedName>
    <alternativeName>
        <fullName>10.9 kDa protein</fullName>
    </alternativeName>
    <alternativeName>
        <fullName>Protein L4</fullName>
    </alternativeName>
</protein>
<feature type="initiator methionine" description="Removed" evidence="1">
    <location>
        <position position="1"/>
    </location>
</feature>
<feature type="chain" id="PRO_0000312156" description="Protein C4">
    <location>
        <begin position="2"/>
        <end position="97"/>
    </location>
</feature>
<feature type="region of interest" description="Disordered" evidence="2">
    <location>
        <begin position="1"/>
        <end position="31"/>
    </location>
</feature>
<feature type="region of interest" description="Disordered" evidence="2">
    <location>
        <begin position="75"/>
        <end position="97"/>
    </location>
</feature>
<feature type="compositionally biased region" description="Polar residues" evidence="2">
    <location>
        <begin position="77"/>
        <end position="88"/>
    </location>
</feature>
<feature type="lipid moiety-binding region" description="N-myristoyl glycine; by host" evidence="1">
    <location>
        <position position="2"/>
    </location>
</feature>
<sequence>MGLLTCMFSSNSKESSSVRIKDSSISHPHTGQHISIRTFRELKAQQMSNPTWKKTETCLIMEFSRSMEDRLEEVANLPTTHMPRQSIQGPKLRPSIY</sequence>
<comment type="function">
    <text evidence="1">Pathogenicity determinant (By similarity). May act as a suppressor of RNA-mediated gene silencing, also known as post-transcriptional gene silencing (PTGS), a mechanism of plant viral defense that limits the accumulation of viral RNAs.</text>
</comment>
<comment type="subcellular location">
    <subcellularLocation>
        <location evidence="1">Host cell membrane</location>
        <topology evidence="1">Lipid-anchor</topology>
    </subcellularLocation>
    <text evidence="1">Localizes to the cell periphery.</text>
</comment>
<comment type="similarity">
    <text evidence="3">Belongs to the geminiviridae protein AC4/C4 family.</text>
</comment>